<evidence type="ECO:0000255" key="1">
    <source>
        <dbReference type="HAMAP-Rule" id="MF_00744"/>
    </source>
</evidence>
<keyword id="KW-0028">Amino-acid biosynthesis</keyword>
<keyword id="KW-0963">Cytoplasm</keyword>
<keyword id="KW-0238">DNA-binding</keyword>
<keyword id="KW-0486">Methionine biosynthesis</keyword>
<keyword id="KW-1185">Reference proteome</keyword>
<keyword id="KW-0678">Repressor</keyword>
<keyword id="KW-0804">Transcription</keyword>
<keyword id="KW-0805">Transcription regulation</keyword>
<feature type="chain" id="PRO_1000191216" description="Met repressor">
    <location>
        <begin position="1"/>
        <end position="105"/>
    </location>
</feature>
<reference key="1">
    <citation type="journal article" date="2008" name="J. Bacteriol.">
        <title>Complete genome sequence of uropathogenic Proteus mirabilis, a master of both adherence and motility.</title>
        <authorList>
            <person name="Pearson M.M."/>
            <person name="Sebaihia M."/>
            <person name="Churcher C."/>
            <person name="Quail M.A."/>
            <person name="Seshasayee A.S."/>
            <person name="Luscombe N.M."/>
            <person name="Abdellah Z."/>
            <person name="Arrosmith C."/>
            <person name="Atkin B."/>
            <person name="Chillingworth T."/>
            <person name="Hauser H."/>
            <person name="Jagels K."/>
            <person name="Moule S."/>
            <person name="Mungall K."/>
            <person name="Norbertczak H."/>
            <person name="Rabbinowitsch E."/>
            <person name="Walker D."/>
            <person name="Whithead S."/>
            <person name="Thomson N.R."/>
            <person name="Rather P.N."/>
            <person name="Parkhill J."/>
            <person name="Mobley H.L.T."/>
        </authorList>
    </citation>
    <scope>NUCLEOTIDE SEQUENCE [LARGE SCALE GENOMIC DNA]</scope>
    <source>
        <strain>HI4320</strain>
    </source>
</reference>
<name>METJ_PROMH</name>
<protein>
    <recommendedName>
        <fullName evidence="1">Met repressor</fullName>
    </recommendedName>
    <alternativeName>
        <fullName evidence="1">Met regulon regulatory protein MetJ</fullName>
    </alternativeName>
</protein>
<accession>B4F178</accession>
<sequence length="105" mass="12293">MAEWNGEYISPYAEHGKKSEQVKKITVSIPLKVLKILTDERTRRQVNNLKHATNSELLCEAFLHAFTGQPLPNDEDLRKERNDEIPEEAKEIMRQRGVDPETWEY</sequence>
<comment type="function">
    <text evidence="1">This regulatory protein, when combined with SAM (S-adenosylmethionine) represses the expression of the methionine regulon and of enzymes involved in SAM synthesis.</text>
</comment>
<comment type="subunit">
    <text evidence="1">Homodimer.</text>
</comment>
<comment type="subcellular location">
    <subcellularLocation>
        <location evidence="1">Cytoplasm</location>
    </subcellularLocation>
</comment>
<comment type="domain">
    <text>Does not bind DNA by a helix-turn-helix motif.</text>
</comment>
<comment type="similarity">
    <text evidence="1">Belongs to the MetJ family.</text>
</comment>
<organism>
    <name type="scientific">Proteus mirabilis (strain HI4320)</name>
    <dbReference type="NCBI Taxonomy" id="529507"/>
    <lineage>
        <taxon>Bacteria</taxon>
        <taxon>Pseudomonadati</taxon>
        <taxon>Pseudomonadota</taxon>
        <taxon>Gammaproteobacteria</taxon>
        <taxon>Enterobacterales</taxon>
        <taxon>Morganellaceae</taxon>
        <taxon>Proteus</taxon>
    </lineage>
</organism>
<dbReference type="EMBL" id="AM942759">
    <property type="protein sequence ID" value="CAR46314.1"/>
    <property type="molecule type" value="Genomic_DNA"/>
</dbReference>
<dbReference type="RefSeq" id="WP_004246409.1">
    <property type="nucleotide sequence ID" value="NC_010554.1"/>
</dbReference>
<dbReference type="SMR" id="B4F178"/>
<dbReference type="EnsemblBacteria" id="CAR46314">
    <property type="protein sequence ID" value="CAR46314"/>
    <property type="gene ID" value="PMI3222"/>
</dbReference>
<dbReference type="GeneID" id="6803487"/>
<dbReference type="KEGG" id="pmr:PMI3222"/>
<dbReference type="eggNOG" id="COG3060">
    <property type="taxonomic scope" value="Bacteria"/>
</dbReference>
<dbReference type="HOGENOM" id="CLU_142318_0_0_6"/>
<dbReference type="Proteomes" id="UP000008319">
    <property type="component" value="Chromosome"/>
</dbReference>
<dbReference type="GO" id="GO:0005737">
    <property type="term" value="C:cytoplasm"/>
    <property type="evidence" value="ECO:0007669"/>
    <property type="project" value="UniProtKB-SubCell"/>
</dbReference>
<dbReference type="GO" id="GO:0003677">
    <property type="term" value="F:DNA binding"/>
    <property type="evidence" value="ECO:0007669"/>
    <property type="project" value="UniProtKB-KW"/>
</dbReference>
<dbReference type="GO" id="GO:0003700">
    <property type="term" value="F:DNA-binding transcription factor activity"/>
    <property type="evidence" value="ECO:0007669"/>
    <property type="project" value="InterPro"/>
</dbReference>
<dbReference type="GO" id="GO:0009086">
    <property type="term" value="P:methionine biosynthetic process"/>
    <property type="evidence" value="ECO:0007669"/>
    <property type="project" value="UniProtKB-UniRule"/>
</dbReference>
<dbReference type="GO" id="GO:0045892">
    <property type="term" value="P:negative regulation of DNA-templated transcription"/>
    <property type="evidence" value="ECO:0007669"/>
    <property type="project" value="UniProtKB-UniRule"/>
</dbReference>
<dbReference type="CDD" id="cd00490">
    <property type="entry name" value="Met_repressor_MetJ"/>
    <property type="match status" value="1"/>
</dbReference>
<dbReference type="FunFam" id="1.10.140.10:FF:000001">
    <property type="entry name" value="Met repressor"/>
    <property type="match status" value="1"/>
</dbReference>
<dbReference type="Gene3D" id="1.10.140.10">
    <property type="entry name" value="MET Apo-Repressor, subunit A"/>
    <property type="match status" value="1"/>
</dbReference>
<dbReference type="HAMAP" id="MF_00744">
    <property type="entry name" value="MetJ"/>
    <property type="match status" value="1"/>
</dbReference>
<dbReference type="InterPro" id="IPR002084">
    <property type="entry name" value="Met_repressor_MetJ"/>
</dbReference>
<dbReference type="InterPro" id="IPR023453">
    <property type="entry name" value="Met_repressor_MetJ_dom_sf"/>
</dbReference>
<dbReference type="InterPro" id="IPR010985">
    <property type="entry name" value="Ribbon_hlx_hlx"/>
</dbReference>
<dbReference type="NCBIfam" id="NF003622">
    <property type="entry name" value="PRK05264.1"/>
    <property type="match status" value="1"/>
</dbReference>
<dbReference type="Pfam" id="PF01340">
    <property type="entry name" value="MetJ"/>
    <property type="match status" value="1"/>
</dbReference>
<dbReference type="SUPFAM" id="SSF47598">
    <property type="entry name" value="Ribbon-helix-helix"/>
    <property type="match status" value="1"/>
</dbReference>
<proteinExistence type="inferred from homology"/>
<gene>
    <name evidence="1" type="primary">metJ</name>
    <name type="ordered locus">PMI3222</name>
</gene>